<sequence length="263" mass="29537">MDTLTASREKLAEKSKISVKNLDFFYGKFHALKSINLEIPEKKVTAFIGPSGCGKSTLLRIFNRMYELYPEQRAEGDVTFDGENLLTSKKDVALIRSKVGMVFQKPTPFPMSIYDNIAFGVKLFESLNASDMDERVEWALRKAALWGEVKDKLNQSGSSLSGGQQQRLCIARGIAIKPEVLLLDEPCSALDPISTAKVEELIAELKNDYTVVIVTHNMQQAARCSDYTAYMYLGDLVEFGATEDLFFKPKRKETEDYITGRFG</sequence>
<keyword id="KW-0067">ATP-binding</keyword>
<keyword id="KW-0997">Cell inner membrane</keyword>
<keyword id="KW-1003">Cell membrane</keyword>
<keyword id="KW-0472">Membrane</keyword>
<keyword id="KW-0547">Nucleotide-binding</keyword>
<keyword id="KW-0592">Phosphate transport</keyword>
<keyword id="KW-1185">Reference proteome</keyword>
<keyword id="KW-1278">Translocase</keyword>
<keyword id="KW-0813">Transport</keyword>
<evidence type="ECO:0000255" key="1">
    <source>
        <dbReference type="HAMAP-Rule" id="MF_01702"/>
    </source>
</evidence>
<proteinExistence type="inferred from homology"/>
<comment type="function">
    <text evidence="1">Part of the ABC transporter complex PstSACB involved in phosphate import. Responsible for energy coupling to the transport system.</text>
</comment>
<comment type="catalytic activity">
    <reaction evidence="1">
        <text>phosphate(out) + ATP + H2O = ADP + 2 phosphate(in) + H(+)</text>
        <dbReference type="Rhea" id="RHEA:24440"/>
        <dbReference type="ChEBI" id="CHEBI:15377"/>
        <dbReference type="ChEBI" id="CHEBI:15378"/>
        <dbReference type="ChEBI" id="CHEBI:30616"/>
        <dbReference type="ChEBI" id="CHEBI:43474"/>
        <dbReference type="ChEBI" id="CHEBI:456216"/>
        <dbReference type="EC" id="7.3.2.1"/>
    </reaction>
</comment>
<comment type="subunit">
    <text evidence="1">The complex is composed of two ATP-binding proteins (PstB), two transmembrane proteins (PstC and PstA) and a solute-binding protein (PstS).</text>
</comment>
<comment type="subcellular location">
    <subcellularLocation>
        <location evidence="1">Cell inner membrane</location>
        <topology evidence="1">Peripheral membrane protein</topology>
    </subcellularLocation>
</comment>
<comment type="similarity">
    <text evidence="1">Belongs to the ABC transporter superfamily. Phosphate importer (TC 3.A.1.7) family.</text>
</comment>
<name>PSTB_POLSJ</name>
<protein>
    <recommendedName>
        <fullName evidence="1">Phosphate import ATP-binding protein PstB</fullName>
        <ecNumber evidence="1">7.3.2.1</ecNumber>
    </recommendedName>
    <alternativeName>
        <fullName evidence="1">ABC phosphate transporter</fullName>
    </alternativeName>
    <alternativeName>
        <fullName evidence="1">Phosphate-transporting ATPase</fullName>
    </alternativeName>
</protein>
<feature type="chain" id="PRO_0000272492" description="Phosphate import ATP-binding protein PstB">
    <location>
        <begin position="1"/>
        <end position="263"/>
    </location>
</feature>
<feature type="domain" description="ABC transporter" evidence="1">
    <location>
        <begin position="17"/>
        <end position="258"/>
    </location>
</feature>
<feature type="binding site" evidence="1">
    <location>
        <begin position="49"/>
        <end position="56"/>
    </location>
    <ligand>
        <name>ATP</name>
        <dbReference type="ChEBI" id="CHEBI:30616"/>
    </ligand>
</feature>
<gene>
    <name evidence="1" type="primary">pstB</name>
    <name type="ordered locus">Bpro_2255</name>
</gene>
<organism>
    <name type="scientific">Polaromonas sp. (strain JS666 / ATCC BAA-500)</name>
    <dbReference type="NCBI Taxonomy" id="296591"/>
    <lineage>
        <taxon>Bacteria</taxon>
        <taxon>Pseudomonadati</taxon>
        <taxon>Pseudomonadota</taxon>
        <taxon>Betaproteobacteria</taxon>
        <taxon>Burkholderiales</taxon>
        <taxon>Comamonadaceae</taxon>
        <taxon>Polaromonas</taxon>
    </lineage>
</organism>
<dbReference type="EC" id="7.3.2.1" evidence="1"/>
<dbReference type="EMBL" id="CP000316">
    <property type="protein sequence ID" value="ABE44180.1"/>
    <property type="molecule type" value="Genomic_DNA"/>
</dbReference>
<dbReference type="RefSeq" id="WP_011483178.1">
    <property type="nucleotide sequence ID" value="NC_007948.1"/>
</dbReference>
<dbReference type="SMR" id="Q12BB2"/>
<dbReference type="STRING" id="296591.Bpro_2255"/>
<dbReference type="KEGG" id="pol:Bpro_2255"/>
<dbReference type="eggNOG" id="COG1117">
    <property type="taxonomic scope" value="Bacteria"/>
</dbReference>
<dbReference type="HOGENOM" id="CLU_000604_1_22_4"/>
<dbReference type="OrthoDB" id="9802264at2"/>
<dbReference type="Proteomes" id="UP000001983">
    <property type="component" value="Chromosome"/>
</dbReference>
<dbReference type="GO" id="GO:0005886">
    <property type="term" value="C:plasma membrane"/>
    <property type="evidence" value="ECO:0007669"/>
    <property type="project" value="UniProtKB-SubCell"/>
</dbReference>
<dbReference type="GO" id="GO:0005524">
    <property type="term" value="F:ATP binding"/>
    <property type="evidence" value="ECO:0007669"/>
    <property type="project" value="UniProtKB-KW"/>
</dbReference>
<dbReference type="GO" id="GO:0016887">
    <property type="term" value="F:ATP hydrolysis activity"/>
    <property type="evidence" value="ECO:0007669"/>
    <property type="project" value="InterPro"/>
</dbReference>
<dbReference type="GO" id="GO:0015415">
    <property type="term" value="F:ATPase-coupled phosphate ion transmembrane transporter activity"/>
    <property type="evidence" value="ECO:0007669"/>
    <property type="project" value="UniProtKB-EC"/>
</dbReference>
<dbReference type="GO" id="GO:0035435">
    <property type="term" value="P:phosphate ion transmembrane transport"/>
    <property type="evidence" value="ECO:0007669"/>
    <property type="project" value="InterPro"/>
</dbReference>
<dbReference type="CDD" id="cd03260">
    <property type="entry name" value="ABC_PstB_phosphate_transporter"/>
    <property type="match status" value="1"/>
</dbReference>
<dbReference type="FunFam" id="3.40.50.300:FF:000132">
    <property type="entry name" value="Phosphate import ATP-binding protein PstB"/>
    <property type="match status" value="1"/>
</dbReference>
<dbReference type="Gene3D" id="3.40.50.300">
    <property type="entry name" value="P-loop containing nucleotide triphosphate hydrolases"/>
    <property type="match status" value="1"/>
</dbReference>
<dbReference type="InterPro" id="IPR003593">
    <property type="entry name" value="AAA+_ATPase"/>
</dbReference>
<dbReference type="InterPro" id="IPR003439">
    <property type="entry name" value="ABC_transporter-like_ATP-bd"/>
</dbReference>
<dbReference type="InterPro" id="IPR017871">
    <property type="entry name" value="ABC_transporter-like_CS"/>
</dbReference>
<dbReference type="InterPro" id="IPR027417">
    <property type="entry name" value="P-loop_NTPase"/>
</dbReference>
<dbReference type="InterPro" id="IPR005670">
    <property type="entry name" value="PstB-like"/>
</dbReference>
<dbReference type="NCBIfam" id="TIGR00972">
    <property type="entry name" value="3a0107s01c2"/>
    <property type="match status" value="1"/>
</dbReference>
<dbReference type="PANTHER" id="PTHR43423">
    <property type="entry name" value="ABC TRANSPORTER I FAMILY MEMBER 17"/>
    <property type="match status" value="1"/>
</dbReference>
<dbReference type="PANTHER" id="PTHR43423:SF3">
    <property type="entry name" value="PHOSPHATE IMPORT ATP-BINDING PROTEIN PSTB"/>
    <property type="match status" value="1"/>
</dbReference>
<dbReference type="Pfam" id="PF00005">
    <property type="entry name" value="ABC_tran"/>
    <property type="match status" value="1"/>
</dbReference>
<dbReference type="SMART" id="SM00382">
    <property type="entry name" value="AAA"/>
    <property type="match status" value="1"/>
</dbReference>
<dbReference type="SUPFAM" id="SSF52540">
    <property type="entry name" value="P-loop containing nucleoside triphosphate hydrolases"/>
    <property type="match status" value="1"/>
</dbReference>
<dbReference type="PROSITE" id="PS00211">
    <property type="entry name" value="ABC_TRANSPORTER_1"/>
    <property type="match status" value="1"/>
</dbReference>
<dbReference type="PROSITE" id="PS50893">
    <property type="entry name" value="ABC_TRANSPORTER_2"/>
    <property type="match status" value="1"/>
</dbReference>
<dbReference type="PROSITE" id="PS51238">
    <property type="entry name" value="PSTB"/>
    <property type="match status" value="1"/>
</dbReference>
<reference key="1">
    <citation type="journal article" date="2008" name="Appl. Environ. Microbiol.">
        <title>The genome of Polaromonas sp. strain JS666: insights into the evolution of a hydrocarbon- and xenobiotic-degrading bacterium, and features of relevance to biotechnology.</title>
        <authorList>
            <person name="Mattes T.E."/>
            <person name="Alexander A.K."/>
            <person name="Richardson P.M."/>
            <person name="Munk A.C."/>
            <person name="Han C.S."/>
            <person name="Stothard P."/>
            <person name="Coleman N.V."/>
        </authorList>
    </citation>
    <scope>NUCLEOTIDE SEQUENCE [LARGE SCALE GENOMIC DNA]</scope>
    <source>
        <strain>JS666 / ATCC BAA-500</strain>
    </source>
</reference>
<accession>Q12BB2</accession>